<feature type="chain" id="PRO_0000267735" description="3-hydroxydecanoyl-[acyl-carrier-protein] dehydratase">
    <location>
        <begin position="1"/>
        <end position="171"/>
    </location>
</feature>
<feature type="active site" evidence="1">
    <location>
        <position position="70"/>
    </location>
</feature>
<gene>
    <name evidence="1" type="primary">fabA</name>
    <name type="ordered locus">Mfla_1894</name>
</gene>
<evidence type="ECO:0000255" key="1">
    <source>
        <dbReference type="HAMAP-Rule" id="MF_00405"/>
    </source>
</evidence>
<keyword id="KW-0963">Cytoplasm</keyword>
<keyword id="KW-0275">Fatty acid biosynthesis</keyword>
<keyword id="KW-0276">Fatty acid metabolism</keyword>
<keyword id="KW-0413">Isomerase</keyword>
<keyword id="KW-0444">Lipid biosynthesis</keyword>
<keyword id="KW-0443">Lipid metabolism</keyword>
<keyword id="KW-0456">Lyase</keyword>
<keyword id="KW-1185">Reference proteome</keyword>
<reference key="1">
    <citation type="submission" date="2006-03" db="EMBL/GenBank/DDBJ databases">
        <title>Complete sequence of Methylobacillus flagellatus KT.</title>
        <authorList>
            <consortium name="US DOE Joint Genome Institute"/>
            <person name="Copeland A."/>
            <person name="Lucas S."/>
            <person name="Lapidus A."/>
            <person name="Barry K."/>
            <person name="Detter J.C."/>
            <person name="Glavina del Rio T."/>
            <person name="Hammon N."/>
            <person name="Israni S."/>
            <person name="Dalin E."/>
            <person name="Tice H."/>
            <person name="Pitluck S."/>
            <person name="Brettin T."/>
            <person name="Bruce D."/>
            <person name="Han C."/>
            <person name="Tapia R."/>
            <person name="Saunders E."/>
            <person name="Gilna P."/>
            <person name="Schmutz J."/>
            <person name="Larimer F."/>
            <person name="Land M."/>
            <person name="Kyrpides N."/>
            <person name="Anderson I."/>
            <person name="Richardson P."/>
        </authorList>
    </citation>
    <scope>NUCLEOTIDE SEQUENCE [LARGE SCALE GENOMIC DNA]</scope>
    <source>
        <strain>ATCC 51484 / DSM 6875 / VKM B-1610 / KT</strain>
    </source>
</reference>
<protein>
    <recommendedName>
        <fullName evidence="1">3-hydroxydecanoyl-[acyl-carrier-protein] dehydratase</fullName>
        <ecNumber evidence="1">4.2.1.59</ecNumber>
    </recommendedName>
    <alternativeName>
        <fullName evidence="1">3-hydroxyacyl-[acyl-carrier-protein] dehydratase FabA</fullName>
    </alternativeName>
    <alternativeName>
        <fullName evidence="1">Beta-hydroxydecanoyl thioester dehydrase</fullName>
    </alternativeName>
    <alternativeName>
        <fullName evidence="1">Trans-2-decenoyl-[acyl-carrier-protein] isomerase</fullName>
        <ecNumber evidence="1">5.3.3.14</ecNumber>
    </alternativeName>
</protein>
<sequence>MQKQNSFTFEELLSCGRGEMFGEGNAQLPLPPMLMFDRIVSITEEGGQYGNGQIVAELDVRPDLWFFNCHFAGDPVMPGCLGLDAMWQLVGFYLGWMGGKGRGRALGAGDVKFTGQVLPTGKLITYRIDLKRVIMRKLVMGIADAHMEIDGREIYVASDLRVGLFTRTDNF</sequence>
<proteinExistence type="inferred from homology"/>
<comment type="function">
    <text evidence="1">Necessary for the introduction of cis unsaturation into fatty acids. Catalyzes the dehydration of (3R)-3-hydroxydecanoyl-ACP to E-(2)-decenoyl-ACP and then its isomerization to Z-(3)-decenoyl-ACP. Can catalyze the dehydratase reaction for beta-hydroxyacyl-ACPs with saturated chain lengths up to 16:0, being most active on intermediate chain length.</text>
</comment>
<comment type="catalytic activity">
    <reaction evidence="1">
        <text>a (3R)-hydroxyacyl-[ACP] = a (2E)-enoyl-[ACP] + H2O</text>
        <dbReference type="Rhea" id="RHEA:13097"/>
        <dbReference type="Rhea" id="RHEA-COMP:9925"/>
        <dbReference type="Rhea" id="RHEA-COMP:9945"/>
        <dbReference type="ChEBI" id="CHEBI:15377"/>
        <dbReference type="ChEBI" id="CHEBI:78784"/>
        <dbReference type="ChEBI" id="CHEBI:78827"/>
        <dbReference type="EC" id="4.2.1.59"/>
    </reaction>
</comment>
<comment type="catalytic activity">
    <reaction evidence="1">
        <text>(3R)-hydroxydecanoyl-[ACP] = (2E)-decenoyl-[ACP] + H2O</text>
        <dbReference type="Rhea" id="RHEA:41860"/>
        <dbReference type="Rhea" id="RHEA-COMP:9638"/>
        <dbReference type="Rhea" id="RHEA-COMP:9639"/>
        <dbReference type="ChEBI" id="CHEBI:15377"/>
        <dbReference type="ChEBI" id="CHEBI:78466"/>
        <dbReference type="ChEBI" id="CHEBI:78467"/>
    </reaction>
</comment>
<comment type="catalytic activity">
    <reaction evidence="1">
        <text>(2E)-decenoyl-[ACP] = (3Z)-decenoyl-[ACP]</text>
        <dbReference type="Rhea" id="RHEA:23568"/>
        <dbReference type="Rhea" id="RHEA-COMP:9639"/>
        <dbReference type="Rhea" id="RHEA-COMP:9927"/>
        <dbReference type="ChEBI" id="CHEBI:78467"/>
        <dbReference type="ChEBI" id="CHEBI:78798"/>
        <dbReference type="EC" id="5.3.3.14"/>
    </reaction>
</comment>
<comment type="pathway">
    <text evidence="1">Lipid metabolism; fatty acid biosynthesis.</text>
</comment>
<comment type="subunit">
    <text evidence="1">Homodimer.</text>
</comment>
<comment type="subcellular location">
    <subcellularLocation>
        <location evidence="1">Cytoplasm</location>
    </subcellularLocation>
</comment>
<comment type="similarity">
    <text evidence="1">Belongs to the thioester dehydratase family. FabA subfamily.</text>
</comment>
<dbReference type="EC" id="4.2.1.59" evidence="1"/>
<dbReference type="EC" id="5.3.3.14" evidence="1"/>
<dbReference type="EMBL" id="CP000284">
    <property type="protein sequence ID" value="ABE50161.1"/>
    <property type="molecule type" value="Genomic_DNA"/>
</dbReference>
<dbReference type="RefSeq" id="WP_011480115.1">
    <property type="nucleotide sequence ID" value="NC_007947.1"/>
</dbReference>
<dbReference type="SMR" id="Q1H026"/>
<dbReference type="STRING" id="265072.Mfla_1894"/>
<dbReference type="KEGG" id="mfa:Mfla_1894"/>
<dbReference type="eggNOG" id="COG0764">
    <property type="taxonomic scope" value="Bacteria"/>
</dbReference>
<dbReference type="HOGENOM" id="CLU_097925_0_0_4"/>
<dbReference type="OrthoDB" id="9786735at2"/>
<dbReference type="UniPathway" id="UPA00094"/>
<dbReference type="Proteomes" id="UP000002440">
    <property type="component" value="Chromosome"/>
</dbReference>
<dbReference type="GO" id="GO:0005737">
    <property type="term" value="C:cytoplasm"/>
    <property type="evidence" value="ECO:0007669"/>
    <property type="project" value="UniProtKB-SubCell"/>
</dbReference>
<dbReference type="GO" id="GO:0019171">
    <property type="term" value="F:(3R)-hydroxyacyl-[acyl-carrier-protein] dehydratase activity"/>
    <property type="evidence" value="ECO:0007669"/>
    <property type="project" value="UniProtKB-UniRule"/>
</dbReference>
<dbReference type="GO" id="GO:0034017">
    <property type="term" value="F:trans-2-decenoyl-acyl-carrier-protein isomerase activity"/>
    <property type="evidence" value="ECO:0007669"/>
    <property type="project" value="UniProtKB-UniRule"/>
</dbReference>
<dbReference type="GO" id="GO:0006636">
    <property type="term" value="P:unsaturated fatty acid biosynthetic process"/>
    <property type="evidence" value="ECO:0007669"/>
    <property type="project" value="UniProtKB-UniRule"/>
</dbReference>
<dbReference type="CDD" id="cd01287">
    <property type="entry name" value="FabA"/>
    <property type="match status" value="1"/>
</dbReference>
<dbReference type="Gene3D" id="3.10.129.10">
    <property type="entry name" value="Hotdog Thioesterase"/>
    <property type="match status" value="1"/>
</dbReference>
<dbReference type="HAMAP" id="MF_00405">
    <property type="entry name" value="FabA"/>
    <property type="match status" value="1"/>
</dbReference>
<dbReference type="InterPro" id="IPR010083">
    <property type="entry name" value="FabA"/>
</dbReference>
<dbReference type="InterPro" id="IPR013114">
    <property type="entry name" value="FabA_FabZ"/>
</dbReference>
<dbReference type="InterPro" id="IPR029069">
    <property type="entry name" value="HotDog_dom_sf"/>
</dbReference>
<dbReference type="NCBIfam" id="TIGR01749">
    <property type="entry name" value="fabA"/>
    <property type="match status" value="1"/>
</dbReference>
<dbReference type="NCBIfam" id="NF003509">
    <property type="entry name" value="PRK05174.1"/>
    <property type="match status" value="1"/>
</dbReference>
<dbReference type="PANTHER" id="PTHR30272">
    <property type="entry name" value="3-HYDROXYACYL-[ACYL-CARRIER-PROTEIN] DEHYDRATASE"/>
    <property type="match status" value="1"/>
</dbReference>
<dbReference type="PANTHER" id="PTHR30272:SF8">
    <property type="entry name" value="3-HYDROXYDECANOYL-[ACYL-CARRIER-PROTEIN] DEHYDRATASE"/>
    <property type="match status" value="1"/>
</dbReference>
<dbReference type="Pfam" id="PF07977">
    <property type="entry name" value="FabA"/>
    <property type="match status" value="1"/>
</dbReference>
<dbReference type="SUPFAM" id="SSF54637">
    <property type="entry name" value="Thioesterase/thiol ester dehydrase-isomerase"/>
    <property type="match status" value="1"/>
</dbReference>
<organism>
    <name type="scientific">Methylobacillus flagellatus (strain ATCC 51484 / DSM 6875 / VKM B-1610 / KT)</name>
    <dbReference type="NCBI Taxonomy" id="265072"/>
    <lineage>
        <taxon>Bacteria</taxon>
        <taxon>Pseudomonadati</taxon>
        <taxon>Pseudomonadota</taxon>
        <taxon>Betaproteobacteria</taxon>
        <taxon>Nitrosomonadales</taxon>
        <taxon>Methylophilaceae</taxon>
        <taxon>Methylobacillus</taxon>
    </lineage>
</organism>
<name>FABA_METFK</name>
<accession>Q1H026</accession>